<name>COABC_VIBVU</name>
<feature type="chain" id="PRO_0000182027" description="Coenzyme A biosynthesis bifunctional protein CoaBC">
    <location>
        <begin position="1"/>
        <end position="401"/>
    </location>
</feature>
<feature type="region of interest" description="Phosphopantothenoylcysteine decarboxylase" evidence="1">
    <location>
        <begin position="1"/>
        <end position="190"/>
    </location>
</feature>
<feature type="region of interest" description="Phosphopantothenate--cysteine ligase" evidence="1">
    <location>
        <begin position="191"/>
        <end position="401"/>
    </location>
</feature>
<feature type="active site" description="Proton donor" evidence="1">
    <location>
        <position position="159"/>
    </location>
</feature>
<feature type="binding site" evidence="1">
    <location>
        <position position="279"/>
    </location>
    <ligand>
        <name>CTP</name>
        <dbReference type="ChEBI" id="CHEBI:37563"/>
    </ligand>
</feature>
<feature type="binding site" evidence="1">
    <location>
        <position position="289"/>
    </location>
    <ligand>
        <name>CTP</name>
        <dbReference type="ChEBI" id="CHEBI:37563"/>
    </ligand>
</feature>
<feature type="binding site" evidence="1">
    <location>
        <begin position="307"/>
        <end position="310"/>
    </location>
    <ligand>
        <name>CTP</name>
        <dbReference type="ChEBI" id="CHEBI:37563"/>
    </ligand>
</feature>
<feature type="binding site" evidence="1">
    <location>
        <position position="326"/>
    </location>
    <ligand>
        <name>CTP</name>
        <dbReference type="ChEBI" id="CHEBI:37563"/>
    </ligand>
</feature>
<feature type="binding site" evidence="1">
    <location>
        <position position="340"/>
    </location>
    <ligand>
        <name>CTP</name>
        <dbReference type="ChEBI" id="CHEBI:37563"/>
    </ligand>
</feature>
<feature type="binding site" evidence="1">
    <location>
        <position position="344"/>
    </location>
    <ligand>
        <name>CTP</name>
        <dbReference type="ChEBI" id="CHEBI:37563"/>
    </ligand>
</feature>
<proteinExistence type="inferred from homology"/>
<comment type="function">
    <text evidence="1">Catalyzes two sequential steps in the biosynthesis of coenzyme A. In the first step cysteine is conjugated to 4'-phosphopantothenate to form 4-phosphopantothenoylcysteine. In the second step the latter compound is decarboxylated to form 4'-phosphopantotheine.</text>
</comment>
<comment type="catalytic activity">
    <reaction evidence="1">
        <text>N-[(R)-4-phosphopantothenoyl]-L-cysteine + H(+) = (R)-4'-phosphopantetheine + CO2</text>
        <dbReference type="Rhea" id="RHEA:16793"/>
        <dbReference type="ChEBI" id="CHEBI:15378"/>
        <dbReference type="ChEBI" id="CHEBI:16526"/>
        <dbReference type="ChEBI" id="CHEBI:59458"/>
        <dbReference type="ChEBI" id="CHEBI:61723"/>
        <dbReference type="EC" id="4.1.1.36"/>
    </reaction>
</comment>
<comment type="catalytic activity">
    <reaction evidence="1">
        <text>(R)-4'-phosphopantothenate + L-cysteine + CTP = N-[(R)-4-phosphopantothenoyl]-L-cysteine + CMP + diphosphate + H(+)</text>
        <dbReference type="Rhea" id="RHEA:19397"/>
        <dbReference type="ChEBI" id="CHEBI:10986"/>
        <dbReference type="ChEBI" id="CHEBI:15378"/>
        <dbReference type="ChEBI" id="CHEBI:33019"/>
        <dbReference type="ChEBI" id="CHEBI:35235"/>
        <dbReference type="ChEBI" id="CHEBI:37563"/>
        <dbReference type="ChEBI" id="CHEBI:59458"/>
        <dbReference type="ChEBI" id="CHEBI:60377"/>
        <dbReference type="EC" id="6.3.2.5"/>
    </reaction>
</comment>
<comment type="cofactor">
    <cofactor evidence="1">
        <name>Mg(2+)</name>
        <dbReference type="ChEBI" id="CHEBI:18420"/>
    </cofactor>
</comment>
<comment type="cofactor">
    <cofactor evidence="1">
        <name>FMN</name>
        <dbReference type="ChEBI" id="CHEBI:58210"/>
    </cofactor>
    <text evidence="1">Binds 1 FMN per subunit.</text>
</comment>
<comment type="pathway">
    <text evidence="1">Cofactor biosynthesis; coenzyme A biosynthesis; CoA from (R)-pantothenate: step 2/5.</text>
</comment>
<comment type="pathway">
    <text evidence="1">Cofactor biosynthesis; coenzyme A biosynthesis; CoA from (R)-pantothenate: step 3/5.</text>
</comment>
<comment type="similarity">
    <text evidence="1">In the N-terminal section; belongs to the HFCD (homo-oligomeric flavin containing Cys decarboxylase) superfamily.</text>
</comment>
<comment type="similarity">
    <text evidence="1">In the C-terminal section; belongs to the PPC synthetase family.</text>
</comment>
<protein>
    <recommendedName>
        <fullName evidence="1">Coenzyme A biosynthesis bifunctional protein CoaBC</fullName>
    </recommendedName>
    <alternativeName>
        <fullName evidence="1">DNA/pantothenate metabolism flavoprotein</fullName>
    </alternativeName>
    <alternativeName>
        <fullName evidence="1">Phosphopantothenoylcysteine synthetase/decarboxylase</fullName>
        <shortName evidence="1">PPCS-PPCDC</shortName>
    </alternativeName>
    <domain>
        <recommendedName>
            <fullName evidence="1">Phosphopantothenoylcysteine decarboxylase</fullName>
            <shortName evidence="1">PPC decarboxylase</shortName>
            <shortName evidence="1">PPC-DC</shortName>
            <ecNumber evidence="1">4.1.1.36</ecNumber>
        </recommendedName>
        <alternativeName>
            <fullName evidence="1">CoaC</fullName>
        </alternativeName>
    </domain>
    <domain>
        <recommendedName>
            <fullName evidence="1">Phosphopantothenate--cysteine ligase</fullName>
            <ecNumber evidence="1">6.3.2.5</ecNumber>
        </recommendedName>
        <alternativeName>
            <fullName evidence="1">CoaB</fullName>
        </alternativeName>
        <alternativeName>
            <fullName evidence="1">Phosphopantothenoylcysteine synthetase</fullName>
            <shortName evidence="1">PPC synthetase</shortName>
            <shortName evidence="1">PPC-S</shortName>
        </alternativeName>
    </domain>
</protein>
<sequence length="401" mass="43027">MQTLAGKKILLGISGGIAAYKCADLTRRLKERGAEVQVVMTKAAKEFITPLTMQAVSGRPVSDSLLDPAAEASMGHIELAKWADLILLAPATADLIARMAAGMGNDLLTTLVLATDAPVAVSPAMNQQMYRNVATQENIATLSRRGMEIWGPAAGEQACGDVGPGRMLEPMQLVALCEQFFQPKPLQDKSILITAGPTREAIDPVRYITNHSSGKMGYALAQAAMQLGANVTLVSGPVSLPTPVNVNRINVDSAQEMYDAVMAQASDHDIFISCAAVADYRPATIAEQKLKKTDDSDEMTITMVKNPDIVASVSAMTENRPFTVGFAAETNDVEVYARRKLEKKKLDLLCANDVSVEGQGFNSSDNAITLYWSQGEKALPLNSKAVLSMEILKQIQTLMGH</sequence>
<organism>
    <name type="scientific">Vibrio vulnificus (strain CMCP6)</name>
    <dbReference type="NCBI Taxonomy" id="216895"/>
    <lineage>
        <taxon>Bacteria</taxon>
        <taxon>Pseudomonadati</taxon>
        <taxon>Pseudomonadota</taxon>
        <taxon>Gammaproteobacteria</taxon>
        <taxon>Vibrionales</taxon>
        <taxon>Vibrionaceae</taxon>
        <taxon>Vibrio</taxon>
    </lineage>
</organism>
<accession>Q8DDX8</accession>
<reference key="1">
    <citation type="submission" date="2002-12" db="EMBL/GenBank/DDBJ databases">
        <title>Complete genome sequence of Vibrio vulnificus CMCP6.</title>
        <authorList>
            <person name="Rhee J.H."/>
            <person name="Kim S.Y."/>
            <person name="Chung S.S."/>
            <person name="Kim J.J."/>
            <person name="Moon Y.H."/>
            <person name="Jeong H."/>
            <person name="Choy H.E."/>
        </authorList>
    </citation>
    <scope>NUCLEOTIDE SEQUENCE [LARGE SCALE GENOMIC DNA]</scope>
    <source>
        <strain>CMCP6</strain>
    </source>
</reference>
<keyword id="KW-0210">Decarboxylase</keyword>
<keyword id="KW-0285">Flavoprotein</keyword>
<keyword id="KW-0288">FMN</keyword>
<keyword id="KW-0436">Ligase</keyword>
<keyword id="KW-0456">Lyase</keyword>
<keyword id="KW-0460">Magnesium</keyword>
<keyword id="KW-0479">Metal-binding</keyword>
<keyword id="KW-0511">Multifunctional enzyme</keyword>
<evidence type="ECO:0000255" key="1">
    <source>
        <dbReference type="HAMAP-Rule" id="MF_02225"/>
    </source>
</evidence>
<dbReference type="EC" id="4.1.1.36" evidence="1"/>
<dbReference type="EC" id="6.3.2.5" evidence="1"/>
<dbReference type="EMBL" id="AE016795">
    <property type="protein sequence ID" value="AAO09331.1"/>
    <property type="molecule type" value="Genomic_DNA"/>
</dbReference>
<dbReference type="RefSeq" id="WP_011078897.1">
    <property type="nucleotide sequence ID" value="NC_004459.3"/>
</dbReference>
<dbReference type="SMR" id="Q8DDX8"/>
<dbReference type="KEGG" id="vvu:VV1_0828"/>
<dbReference type="HOGENOM" id="CLU_033319_0_1_6"/>
<dbReference type="UniPathway" id="UPA00241">
    <property type="reaction ID" value="UER00353"/>
</dbReference>
<dbReference type="UniPathway" id="UPA00241">
    <property type="reaction ID" value="UER00354"/>
</dbReference>
<dbReference type="Proteomes" id="UP000002275">
    <property type="component" value="Chromosome 1"/>
</dbReference>
<dbReference type="GO" id="GO:0071513">
    <property type="term" value="C:phosphopantothenoylcysteine decarboxylase complex"/>
    <property type="evidence" value="ECO:0007669"/>
    <property type="project" value="TreeGrafter"/>
</dbReference>
<dbReference type="GO" id="GO:0010181">
    <property type="term" value="F:FMN binding"/>
    <property type="evidence" value="ECO:0007669"/>
    <property type="project" value="UniProtKB-UniRule"/>
</dbReference>
<dbReference type="GO" id="GO:0046872">
    <property type="term" value="F:metal ion binding"/>
    <property type="evidence" value="ECO:0007669"/>
    <property type="project" value="UniProtKB-KW"/>
</dbReference>
<dbReference type="GO" id="GO:0004632">
    <property type="term" value="F:phosphopantothenate--cysteine ligase activity"/>
    <property type="evidence" value="ECO:0007669"/>
    <property type="project" value="UniProtKB-UniRule"/>
</dbReference>
<dbReference type="GO" id="GO:0004633">
    <property type="term" value="F:phosphopantothenoylcysteine decarboxylase activity"/>
    <property type="evidence" value="ECO:0007669"/>
    <property type="project" value="UniProtKB-UniRule"/>
</dbReference>
<dbReference type="GO" id="GO:0015937">
    <property type="term" value="P:coenzyme A biosynthetic process"/>
    <property type="evidence" value="ECO:0007669"/>
    <property type="project" value="UniProtKB-UniRule"/>
</dbReference>
<dbReference type="GO" id="GO:0015941">
    <property type="term" value="P:pantothenate catabolic process"/>
    <property type="evidence" value="ECO:0007669"/>
    <property type="project" value="InterPro"/>
</dbReference>
<dbReference type="Gene3D" id="3.40.50.10300">
    <property type="entry name" value="CoaB-like"/>
    <property type="match status" value="1"/>
</dbReference>
<dbReference type="Gene3D" id="3.40.50.1950">
    <property type="entry name" value="Flavin prenyltransferase-like"/>
    <property type="match status" value="1"/>
</dbReference>
<dbReference type="HAMAP" id="MF_02225">
    <property type="entry name" value="CoaBC"/>
    <property type="match status" value="1"/>
</dbReference>
<dbReference type="InterPro" id="IPR035929">
    <property type="entry name" value="CoaB-like_sf"/>
</dbReference>
<dbReference type="InterPro" id="IPR005252">
    <property type="entry name" value="CoaBC"/>
</dbReference>
<dbReference type="InterPro" id="IPR007085">
    <property type="entry name" value="DNA/pantothenate-metab_flavo_C"/>
</dbReference>
<dbReference type="InterPro" id="IPR036551">
    <property type="entry name" value="Flavin_trans-like"/>
</dbReference>
<dbReference type="InterPro" id="IPR003382">
    <property type="entry name" value="Flavoprotein"/>
</dbReference>
<dbReference type="NCBIfam" id="TIGR00521">
    <property type="entry name" value="coaBC_dfp"/>
    <property type="match status" value="1"/>
</dbReference>
<dbReference type="PANTHER" id="PTHR14359">
    <property type="entry name" value="HOMO-OLIGOMERIC FLAVIN CONTAINING CYS DECARBOXYLASE FAMILY"/>
    <property type="match status" value="1"/>
</dbReference>
<dbReference type="PANTHER" id="PTHR14359:SF6">
    <property type="entry name" value="PHOSPHOPANTOTHENOYLCYSTEINE DECARBOXYLASE"/>
    <property type="match status" value="1"/>
</dbReference>
<dbReference type="Pfam" id="PF04127">
    <property type="entry name" value="DFP"/>
    <property type="match status" value="1"/>
</dbReference>
<dbReference type="Pfam" id="PF02441">
    <property type="entry name" value="Flavoprotein"/>
    <property type="match status" value="1"/>
</dbReference>
<dbReference type="SUPFAM" id="SSF102645">
    <property type="entry name" value="CoaB-like"/>
    <property type="match status" value="1"/>
</dbReference>
<dbReference type="SUPFAM" id="SSF52507">
    <property type="entry name" value="Homo-oligomeric flavin-containing Cys decarboxylases, HFCD"/>
    <property type="match status" value="1"/>
</dbReference>
<gene>
    <name evidence="1" type="primary">coaBC</name>
    <name type="ordered locus">VV1_0828</name>
</gene>